<reference key="1">
    <citation type="journal article" date="1988" name="Nucleic Acids Res.">
        <title>Genome organization of Artemia mitochondrial DNA.</title>
        <authorList>
            <person name="Batuecas B."/>
            <person name="Garesse R."/>
            <person name="Calleja M."/>
            <person name="Valverde J.R."/>
            <person name="Marco R."/>
        </authorList>
    </citation>
    <scope>NUCLEOTIDE SEQUENCE [GENOMIC DNA]</scope>
</reference>
<protein>
    <recommendedName>
        <fullName>NADH-ubiquinone oxidoreductase chain 4L</fullName>
        <ecNumber>7.1.1.2</ecNumber>
    </recommendedName>
    <alternativeName>
        <fullName>NADH dehydrogenase subunit 4L</fullName>
    </alternativeName>
</protein>
<proteinExistence type="inferred from homology"/>
<comment type="function">
    <text evidence="1">Core subunit of the mitochondrial membrane respiratory chain NADH dehydrogenase (Complex I) that is believed to belong to the minimal assembly required for catalysis. Complex I functions in the transfer of electrons from NADH to the respiratory chain. The immediate electron acceptor for the enzyme is believed to be ubiquinone (By similarity).</text>
</comment>
<comment type="catalytic activity">
    <reaction>
        <text>a ubiquinone + NADH + 5 H(+)(in) = a ubiquinol + NAD(+) + 4 H(+)(out)</text>
        <dbReference type="Rhea" id="RHEA:29091"/>
        <dbReference type="Rhea" id="RHEA-COMP:9565"/>
        <dbReference type="Rhea" id="RHEA-COMP:9566"/>
        <dbReference type="ChEBI" id="CHEBI:15378"/>
        <dbReference type="ChEBI" id="CHEBI:16389"/>
        <dbReference type="ChEBI" id="CHEBI:17976"/>
        <dbReference type="ChEBI" id="CHEBI:57540"/>
        <dbReference type="ChEBI" id="CHEBI:57945"/>
        <dbReference type="EC" id="7.1.1.2"/>
    </reaction>
</comment>
<comment type="subcellular location">
    <subcellularLocation>
        <location evidence="1">Mitochondrion membrane</location>
        <topology evidence="1">Multi-pass membrane protein</topology>
    </subcellularLocation>
</comment>
<comment type="similarity">
    <text evidence="3">Belongs to the complex I subunit 4L family.</text>
</comment>
<geneLocation type="mitochondrion"/>
<feature type="chain" id="PRO_0000118387" description="NADH-ubiquinone oxidoreductase chain 4L">
    <location>
        <begin position="1"/>
        <end position="86"/>
    </location>
</feature>
<feature type="transmembrane region" description="Helical" evidence="2">
    <location>
        <begin position="22"/>
        <end position="42"/>
    </location>
</feature>
<feature type="transmembrane region" description="Helical" evidence="2">
    <location>
        <begin position="52"/>
        <end position="72"/>
    </location>
</feature>
<keyword id="KW-0249">Electron transport</keyword>
<keyword id="KW-0472">Membrane</keyword>
<keyword id="KW-0496">Mitochondrion</keyword>
<keyword id="KW-0520">NAD</keyword>
<keyword id="KW-0679">Respiratory chain</keyword>
<keyword id="KW-1278">Translocase</keyword>
<keyword id="KW-0812">Transmembrane</keyword>
<keyword id="KW-1133">Transmembrane helix</keyword>
<keyword id="KW-0813">Transport</keyword>
<keyword id="KW-0830">Ubiquinone</keyword>
<name>NU4LM_ARTSA</name>
<gene>
    <name type="primary">ND4L</name>
</gene>
<accession>P19049</accession>
<evidence type="ECO:0000250" key="1"/>
<evidence type="ECO:0000255" key="2"/>
<evidence type="ECO:0000305" key="3"/>
<sequence length="86" mass="9547">MMMIYLSLSLGLLIFSSSNKHLLVTLLSFEFLILLLFSLLVYSNYMSMINAFIFLSVTVCEGALGLSVLVSLVRSSGSDQVQFLNE</sequence>
<organism>
    <name type="scientific">Artemia salina</name>
    <name type="common">Brine shrimp</name>
    <dbReference type="NCBI Taxonomy" id="85549"/>
    <lineage>
        <taxon>Eukaryota</taxon>
        <taxon>Metazoa</taxon>
        <taxon>Ecdysozoa</taxon>
        <taxon>Arthropoda</taxon>
        <taxon>Crustacea</taxon>
        <taxon>Branchiopoda</taxon>
        <taxon>Anostraca</taxon>
        <taxon>Artemiidae</taxon>
        <taxon>Artemia</taxon>
    </lineage>
</organism>
<dbReference type="EC" id="7.1.1.2"/>
<dbReference type="EMBL" id="X07661">
    <property type="protein sequence ID" value="CAA30508.1"/>
    <property type="molecule type" value="Genomic_DNA"/>
</dbReference>
<dbReference type="SMR" id="P19049"/>
<dbReference type="GO" id="GO:0031966">
    <property type="term" value="C:mitochondrial membrane"/>
    <property type="evidence" value="ECO:0007669"/>
    <property type="project" value="UniProtKB-SubCell"/>
</dbReference>
<dbReference type="GO" id="GO:0008137">
    <property type="term" value="F:NADH dehydrogenase (ubiquinone) activity"/>
    <property type="evidence" value="ECO:0007669"/>
    <property type="project" value="UniProtKB-EC"/>
</dbReference>
<dbReference type="Gene3D" id="1.10.287.3510">
    <property type="match status" value="1"/>
</dbReference>
<dbReference type="InterPro" id="IPR039428">
    <property type="entry name" value="NUOK/Mnh_C1-like"/>
</dbReference>
<dbReference type="Pfam" id="PF00420">
    <property type="entry name" value="Oxidored_q2"/>
    <property type="match status" value="1"/>
</dbReference>